<accession>Q47N85</accession>
<organism>
    <name type="scientific">Thermobifida fusca (strain YX)</name>
    <dbReference type="NCBI Taxonomy" id="269800"/>
    <lineage>
        <taxon>Bacteria</taxon>
        <taxon>Bacillati</taxon>
        <taxon>Actinomycetota</taxon>
        <taxon>Actinomycetes</taxon>
        <taxon>Streptosporangiales</taxon>
        <taxon>Nocardiopsidaceae</taxon>
        <taxon>Thermobifida</taxon>
    </lineage>
</organism>
<evidence type="ECO:0000255" key="1">
    <source>
        <dbReference type="HAMAP-Rule" id="MF_00006"/>
    </source>
</evidence>
<feature type="chain" id="PRO_0000240785" description="Argininosuccinate lyase">
    <location>
        <begin position="1"/>
        <end position="476"/>
    </location>
</feature>
<proteinExistence type="inferred from homology"/>
<keyword id="KW-0028">Amino-acid biosynthesis</keyword>
<keyword id="KW-0055">Arginine biosynthesis</keyword>
<keyword id="KW-0963">Cytoplasm</keyword>
<keyword id="KW-0456">Lyase</keyword>
<comment type="catalytic activity">
    <reaction evidence="1">
        <text>2-(N(omega)-L-arginino)succinate = fumarate + L-arginine</text>
        <dbReference type="Rhea" id="RHEA:24020"/>
        <dbReference type="ChEBI" id="CHEBI:29806"/>
        <dbReference type="ChEBI" id="CHEBI:32682"/>
        <dbReference type="ChEBI" id="CHEBI:57472"/>
        <dbReference type="EC" id="4.3.2.1"/>
    </reaction>
</comment>
<comment type="pathway">
    <text evidence="1">Amino-acid biosynthesis; L-arginine biosynthesis; L-arginine from L-ornithine and carbamoyl phosphate: step 3/3.</text>
</comment>
<comment type="subcellular location">
    <subcellularLocation>
        <location evidence="1">Cytoplasm</location>
    </subcellularLocation>
</comment>
<comment type="similarity">
    <text evidence="1">Belongs to the lyase 1 family. Argininosuccinate lyase subfamily.</text>
</comment>
<sequence length="476" mass="51716">MAHEPDSQTVRLWGGRFSGGPSEALARLSQSTHFDWRLARYDIAGSRAHARVLHAAGLLDDAELAQMLRGLDQLEADVASGAFTPSPDDEDVHTALERGFIERVGPELGGRLRAGRSRNDQIATLVRMYLREEARAITALLLDLVAALADQAEANLDVPMPGRTHLQHAQPVLLAHHLMAHAWPLIRDIERLRDWDRRADMSAYGSGALAGSSLGLDPEAVAAELGFSRSVPNSIDGTAARDVVAEFAFVAAMIGVDLSRISEEIILWATKEFSFITLDDAFSTGSSIMPQKKNPDIAELARGKAGRLIGDLAGLLSTLKGLPLAYNRDLQEDKEPVFDAVDTLKVLLPAFTGMVATLTVNRERMAELAPQGFSLATDIAEWLVRQRVPFREAHEIAGACVRVCEERGIDLPDLSDADLAAISPHLTPQVREVLTVQGSLESRAARGGTAPARVREQLAELRKAIDDHRAFTQSHA</sequence>
<dbReference type="EC" id="4.3.2.1" evidence="1"/>
<dbReference type="EMBL" id="CP000088">
    <property type="protein sequence ID" value="AAZ56084.1"/>
    <property type="molecule type" value="Genomic_DNA"/>
</dbReference>
<dbReference type="RefSeq" id="WP_011292474.1">
    <property type="nucleotide sequence ID" value="NC_007333.1"/>
</dbReference>
<dbReference type="SMR" id="Q47N85"/>
<dbReference type="STRING" id="269800.Tfu_2051"/>
<dbReference type="KEGG" id="tfu:Tfu_2051"/>
<dbReference type="eggNOG" id="COG0165">
    <property type="taxonomic scope" value="Bacteria"/>
</dbReference>
<dbReference type="HOGENOM" id="CLU_027272_2_2_11"/>
<dbReference type="OrthoDB" id="9769623at2"/>
<dbReference type="UniPathway" id="UPA00068">
    <property type="reaction ID" value="UER00114"/>
</dbReference>
<dbReference type="GO" id="GO:0005829">
    <property type="term" value="C:cytosol"/>
    <property type="evidence" value="ECO:0007669"/>
    <property type="project" value="TreeGrafter"/>
</dbReference>
<dbReference type="GO" id="GO:0004056">
    <property type="term" value="F:argininosuccinate lyase activity"/>
    <property type="evidence" value="ECO:0007669"/>
    <property type="project" value="UniProtKB-UniRule"/>
</dbReference>
<dbReference type="GO" id="GO:0042450">
    <property type="term" value="P:arginine biosynthetic process via ornithine"/>
    <property type="evidence" value="ECO:0007669"/>
    <property type="project" value="InterPro"/>
</dbReference>
<dbReference type="GO" id="GO:0006526">
    <property type="term" value="P:L-arginine biosynthetic process"/>
    <property type="evidence" value="ECO:0007669"/>
    <property type="project" value="UniProtKB-UniRule"/>
</dbReference>
<dbReference type="CDD" id="cd01359">
    <property type="entry name" value="Argininosuccinate_lyase"/>
    <property type="match status" value="1"/>
</dbReference>
<dbReference type="FunFam" id="1.10.275.10:FF:000002">
    <property type="entry name" value="Argininosuccinate lyase"/>
    <property type="match status" value="1"/>
</dbReference>
<dbReference type="FunFam" id="1.10.40.30:FF:000001">
    <property type="entry name" value="Argininosuccinate lyase"/>
    <property type="match status" value="1"/>
</dbReference>
<dbReference type="FunFam" id="1.20.200.10:FF:000002">
    <property type="entry name" value="Argininosuccinate lyase"/>
    <property type="match status" value="1"/>
</dbReference>
<dbReference type="Gene3D" id="1.10.40.30">
    <property type="entry name" value="Fumarase/aspartase (C-terminal domain)"/>
    <property type="match status" value="1"/>
</dbReference>
<dbReference type="Gene3D" id="1.20.200.10">
    <property type="entry name" value="Fumarase/aspartase (Central domain)"/>
    <property type="match status" value="1"/>
</dbReference>
<dbReference type="Gene3D" id="1.10.275.10">
    <property type="entry name" value="Fumarase/aspartase (N-terminal domain)"/>
    <property type="match status" value="1"/>
</dbReference>
<dbReference type="HAMAP" id="MF_00006">
    <property type="entry name" value="Arg_succ_lyase"/>
    <property type="match status" value="1"/>
</dbReference>
<dbReference type="InterPro" id="IPR029419">
    <property type="entry name" value="Arg_succ_lyase_C"/>
</dbReference>
<dbReference type="InterPro" id="IPR009049">
    <property type="entry name" value="Argininosuccinate_lyase"/>
</dbReference>
<dbReference type="InterPro" id="IPR024083">
    <property type="entry name" value="Fumarase/histidase_N"/>
</dbReference>
<dbReference type="InterPro" id="IPR020557">
    <property type="entry name" value="Fumarate_lyase_CS"/>
</dbReference>
<dbReference type="InterPro" id="IPR000362">
    <property type="entry name" value="Fumarate_lyase_fam"/>
</dbReference>
<dbReference type="InterPro" id="IPR022761">
    <property type="entry name" value="Fumarate_lyase_N"/>
</dbReference>
<dbReference type="InterPro" id="IPR008948">
    <property type="entry name" value="L-Aspartase-like"/>
</dbReference>
<dbReference type="NCBIfam" id="TIGR00838">
    <property type="entry name" value="argH"/>
    <property type="match status" value="1"/>
</dbReference>
<dbReference type="PANTHER" id="PTHR43814">
    <property type="entry name" value="ARGININOSUCCINATE LYASE"/>
    <property type="match status" value="1"/>
</dbReference>
<dbReference type="PANTHER" id="PTHR43814:SF1">
    <property type="entry name" value="ARGININOSUCCINATE LYASE"/>
    <property type="match status" value="1"/>
</dbReference>
<dbReference type="Pfam" id="PF14698">
    <property type="entry name" value="ASL_C2"/>
    <property type="match status" value="1"/>
</dbReference>
<dbReference type="Pfam" id="PF00206">
    <property type="entry name" value="Lyase_1"/>
    <property type="match status" value="1"/>
</dbReference>
<dbReference type="PRINTS" id="PR00145">
    <property type="entry name" value="ARGSUCLYASE"/>
</dbReference>
<dbReference type="PRINTS" id="PR00149">
    <property type="entry name" value="FUMRATELYASE"/>
</dbReference>
<dbReference type="SUPFAM" id="SSF48557">
    <property type="entry name" value="L-aspartase-like"/>
    <property type="match status" value="1"/>
</dbReference>
<dbReference type="PROSITE" id="PS00163">
    <property type="entry name" value="FUMARATE_LYASES"/>
    <property type="match status" value="1"/>
</dbReference>
<reference key="1">
    <citation type="journal article" date="2007" name="J. Bacteriol.">
        <title>Genome sequence and analysis of the soil cellulolytic actinomycete Thermobifida fusca YX.</title>
        <authorList>
            <person name="Lykidis A."/>
            <person name="Mavromatis K."/>
            <person name="Ivanova N."/>
            <person name="Anderson I."/>
            <person name="Land M."/>
            <person name="DiBartolo G."/>
            <person name="Martinez M."/>
            <person name="Lapidus A."/>
            <person name="Lucas S."/>
            <person name="Copeland A."/>
            <person name="Richardson P."/>
            <person name="Wilson D.B."/>
            <person name="Kyrpides N."/>
        </authorList>
    </citation>
    <scope>NUCLEOTIDE SEQUENCE [LARGE SCALE GENOMIC DNA]</scope>
    <source>
        <strain>YX</strain>
    </source>
</reference>
<name>ARLY_THEFY</name>
<protein>
    <recommendedName>
        <fullName evidence="1">Argininosuccinate lyase</fullName>
        <shortName evidence="1">ASAL</shortName>
        <ecNumber evidence="1">4.3.2.1</ecNumber>
    </recommendedName>
    <alternativeName>
        <fullName evidence="1">Arginosuccinase</fullName>
    </alternativeName>
</protein>
<gene>
    <name evidence="1" type="primary">argH</name>
    <name type="ordered locus">Tfu_2051</name>
</gene>